<organism>
    <name type="scientific">Saccharomyces cerevisiae (strain ATCC 204508 / S288c)</name>
    <name type="common">Baker's yeast</name>
    <dbReference type="NCBI Taxonomy" id="559292"/>
    <lineage>
        <taxon>Eukaryota</taxon>
        <taxon>Fungi</taxon>
        <taxon>Dikarya</taxon>
        <taxon>Ascomycota</taxon>
        <taxon>Saccharomycotina</taxon>
        <taxon>Saccharomycetes</taxon>
        <taxon>Saccharomycetales</taxon>
        <taxon>Saccharomycetaceae</taxon>
        <taxon>Saccharomyces</taxon>
    </lineage>
</organism>
<feature type="chain" id="PRO_0000202723" description="Uncharacterized protein YGL193C">
    <location>
        <begin position="1"/>
        <end position="103"/>
    </location>
</feature>
<name>YGU3_YEAST</name>
<keyword id="KW-1185">Reference proteome</keyword>
<protein>
    <recommendedName>
        <fullName>Uncharacterized protein YGL193C</fullName>
    </recommendedName>
</protein>
<reference key="1">
    <citation type="journal article" date="1997" name="Yeast">
        <title>Sequencing of a 40.5 kb fragment located on the left arm of chromosome VII from Saccharomyces cerevisiae.</title>
        <authorList>
            <person name="Coglievina M."/>
            <person name="Klima R."/>
            <person name="Bertani I."/>
            <person name="Delneri D."/>
            <person name="Zaccaria P."/>
            <person name="Bruschi C.V."/>
        </authorList>
    </citation>
    <scope>NUCLEOTIDE SEQUENCE [GENOMIC DNA]</scope>
    <source>
        <strain>ATCC 96604 / S288c / FY1679</strain>
    </source>
</reference>
<reference key="2">
    <citation type="journal article" date="1997" name="Nature">
        <title>The nucleotide sequence of Saccharomyces cerevisiae chromosome VII.</title>
        <authorList>
            <person name="Tettelin H."/>
            <person name="Agostoni-Carbone M.L."/>
            <person name="Albermann K."/>
            <person name="Albers M."/>
            <person name="Arroyo J."/>
            <person name="Backes U."/>
            <person name="Barreiros T."/>
            <person name="Bertani I."/>
            <person name="Bjourson A.J."/>
            <person name="Brueckner M."/>
            <person name="Bruschi C.V."/>
            <person name="Carignani G."/>
            <person name="Castagnoli L."/>
            <person name="Cerdan E."/>
            <person name="Clemente M.L."/>
            <person name="Coblenz A."/>
            <person name="Coglievina M."/>
            <person name="Coissac E."/>
            <person name="Defoor E."/>
            <person name="Del Bino S."/>
            <person name="Delius H."/>
            <person name="Delneri D."/>
            <person name="de Wergifosse P."/>
            <person name="Dujon B."/>
            <person name="Durand P."/>
            <person name="Entian K.-D."/>
            <person name="Eraso P."/>
            <person name="Escribano V."/>
            <person name="Fabiani L."/>
            <person name="Fartmann B."/>
            <person name="Feroli F."/>
            <person name="Feuermann M."/>
            <person name="Frontali L."/>
            <person name="Garcia-Gonzalez M."/>
            <person name="Garcia-Saez M.I."/>
            <person name="Goffeau A."/>
            <person name="Guerreiro P."/>
            <person name="Hani J."/>
            <person name="Hansen M."/>
            <person name="Hebling U."/>
            <person name="Hernandez K."/>
            <person name="Heumann K."/>
            <person name="Hilger F."/>
            <person name="Hofmann B."/>
            <person name="Indge K.J."/>
            <person name="James C.M."/>
            <person name="Klima R."/>
            <person name="Koetter P."/>
            <person name="Kramer B."/>
            <person name="Kramer W."/>
            <person name="Lauquin G."/>
            <person name="Leuther H."/>
            <person name="Louis E.J."/>
            <person name="Maillier E."/>
            <person name="Marconi A."/>
            <person name="Martegani E."/>
            <person name="Mazon M.J."/>
            <person name="Mazzoni C."/>
            <person name="McReynolds A.D.K."/>
            <person name="Melchioretto P."/>
            <person name="Mewes H.-W."/>
            <person name="Minenkova O."/>
            <person name="Mueller-Auer S."/>
            <person name="Nawrocki A."/>
            <person name="Netter P."/>
            <person name="Neu R."/>
            <person name="Nombela C."/>
            <person name="Oliver S.G."/>
            <person name="Panzeri L."/>
            <person name="Paoluzi S."/>
            <person name="Plevani P."/>
            <person name="Portetelle D."/>
            <person name="Portillo F."/>
            <person name="Potier S."/>
            <person name="Purnelle B."/>
            <person name="Rieger M."/>
            <person name="Riles L."/>
            <person name="Rinaldi T."/>
            <person name="Robben J."/>
            <person name="Rodrigues-Pousada C."/>
            <person name="Rodriguez-Belmonte E."/>
            <person name="Rodriguez-Torres A.M."/>
            <person name="Rose M."/>
            <person name="Ruzzi M."/>
            <person name="Saliola M."/>
            <person name="Sanchez-Perez M."/>
            <person name="Schaefer B."/>
            <person name="Schaefer M."/>
            <person name="Scharfe M."/>
            <person name="Schmidheini T."/>
            <person name="Schreer A."/>
            <person name="Skala J."/>
            <person name="Souciet J.-L."/>
            <person name="Steensma H.Y."/>
            <person name="Talla E."/>
            <person name="Thierry A."/>
            <person name="Vandenbol M."/>
            <person name="van der Aart Q.J.M."/>
            <person name="Van Dyck L."/>
            <person name="Vanoni M."/>
            <person name="Verhasselt P."/>
            <person name="Voet M."/>
            <person name="Volckaert G."/>
            <person name="Wambutt R."/>
            <person name="Watson M.D."/>
            <person name="Weber N."/>
            <person name="Wedler E."/>
            <person name="Wedler H."/>
            <person name="Wipfli P."/>
            <person name="Wolf K."/>
            <person name="Wright L.F."/>
            <person name="Zaccaria P."/>
            <person name="Zimmermann M."/>
            <person name="Zollner A."/>
            <person name="Kleine K."/>
        </authorList>
    </citation>
    <scope>NUCLEOTIDE SEQUENCE [LARGE SCALE GENOMIC DNA]</scope>
    <source>
        <strain>ATCC 204508 / S288c</strain>
    </source>
</reference>
<reference key="3">
    <citation type="journal article" date="2014" name="G3 (Bethesda)">
        <title>The reference genome sequence of Saccharomyces cerevisiae: Then and now.</title>
        <authorList>
            <person name="Engel S.R."/>
            <person name="Dietrich F.S."/>
            <person name="Fisk D.G."/>
            <person name="Binkley G."/>
            <person name="Balakrishnan R."/>
            <person name="Costanzo M.C."/>
            <person name="Dwight S.S."/>
            <person name="Hitz B.C."/>
            <person name="Karra K."/>
            <person name="Nash R.S."/>
            <person name="Weng S."/>
            <person name="Wong E.D."/>
            <person name="Lloyd P."/>
            <person name="Skrzypek M.S."/>
            <person name="Miyasato S.R."/>
            <person name="Simison M."/>
            <person name="Cherry J.M."/>
        </authorList>
    </citation>
    <scope>GENOME REANNOTATION</scope>
    <source>
        <strain>ATCC 204508 / S288c</strain>
    </source>
</reference>
<accession>P53097</accession>
<accession>D6VTW1</accession>
<proteinExistence type="predicted"/>
<sequence length="103" mass="12000">MNSSLNANSYFFRKPPMLTYMVRFLYCYPSPFPIAPAVTDLPECRGDLSLSLFITSFTSTKERTILYAKSRLKTHIPVNLCDRYHYIPKAPLYQCRMPCLYSI</sequence>
<dbReference type="EMBL" id="X91837">
    <property type="protein sequence ID" value="CAA62951.1"/>
    <property type="molecule type" value="Genomic_DNA"/>
</dbReference>
<dbReference type="EMBL" id="Z72715">
    <property type="protein sequence ID" value="CAA96905.1"/>
    <property type="molecule type" value="Genomic_DNA"/>
</dbReference>
<dbReference type="EMBL" id="BK006941">
    <property type="protein sequence ID" value="DAA07922.1"/>
    <property type="molecule type" value="Genomic_DNA"/>
</dbReference>
<dbReference type="PIR" id="S62052">
    <property type="entry name" value="S62052"/>
</dbReference>
<dbReference type="RefSeq" id="NP_011322.1">
    <property type="nucleotide sequence ID" value="NM_001181058.1"/>
</dbReference>
<dbReference type="BioGRID" id="300579">
    <property type="interactions" value="4"/>
</dbReference>
<dbReference type="FunCoup" id="P53097">
    <property type="interactions" value="36"/>
</dbReference>
<dbReference type="STRING" id="4932.YGL193C"/>
<dbReference type="PaxDb" id="4932-YGL193C"/>
<dbReference type="EnsemblFungi" id="YGL193C_mRNA">
    <property type="protein sequence ID" value="YGL193C"/>
    <property type="gene ID" value="YGL193C"/>
</dbReference>
<dbReference type="GeneID" id="852682"/>
<dbReference type="KEGG" id="sce:YGL193C"/>
<dbReference type="AGR" id="SGD:S000003161"/>
<dbReference type="SGD" id="S000003161">
    <property type="gene designation" value="YGL193C"/>
</dbReference>
<dbReference type="VEuPathDB" id="FungiDB:YGL193C"/>
<dbReference type="HOGENOM" id="CLU_2265822_0_0_1"/>
<dbReference type="InParanoid" id="P53097"/>
<dbReference type="OrthoDB" id="10282759at2759"/>
<dbReference type="BioCyc" id="YEAST:G3O-30674-MONOMER"/>
<dbReference type="BioGRID-ORCS" id="852682">
    <property type="hits" value="0 hits in 10 CRISPR screens"/>
</dbReference>
<dbReference type="PRO" id="PR:P53097"/>
<dbReference type="Proteomes" id="UP000002311">
    <property type="component" value="Chromosome VII"/>
</dbReference>
<dbReference type="RNAct" id="P53097">
    <property type="molecule type" value="protein"/>
</dbReference>
<gene>
    <name type="ordered locus">YGL193C</name>
    <name type="ORF">G1334</name>
</gene>